<comment type="function">
    <text evidence="1">Multidrug efflux pump that functions probably as a Na(+)/drug antiporter.</text>
</comment>
<comment type="subcellular location">
    <subcellularLocation>
        <location evidence="1">Cell inner membrane</location>
        <topology evidence="1">Multi-pass membrane protein</topology>
    </subcellularLocation>
</comment>
<comment type="similarity">
    <text evidence="1">Belongs to the multi antimicrobial extrusion (MATE) (TC 2.A.66.1) family. MdtK subfamily.</text>
</comment>
<gene>
    <name evidence="1" type="primary">mdtK</name>
    <name type="ordered locus">SARI_01557</name>
</gene>
<keyword id="KW-0050">Antiport</keyword>
<keyword id="KW-0997">Cell inner membrane</keyword>
<keyword id="KW-1003">Cell membrane</keyword>
<keyword id="KW-0406">Ion transport</keyword>
<keyword id="KW-0472">Membrane</keyword>
<keyword id="KW-1185">Reference proteome</keyword>
<keyword id="KW-0915">Sodium</keyword>
<keyword id="KW-0739">Sodium transport</keyword>
<keyword id="KW-0812">Transmembrane</keyword>
<keyword id="KW-1133">Transmembrane helix</keyword>
<keyword id="KW-0813">Transport</keyword>
<accession>A9MEJ6</accession>
<dbReference type="EMBL" id="CP000880">
    <property type="protein sequence ID" value="ABX21453.1"/>
    <property type="molecule type" value="Genomic_DNA"/>
</dbReference>
<dbReference type="SMR" id="A9MEJ6"/>
<dbReference type="STRING" id="41514.SARI_01557"/>
<dbReference type="KEGG" id="ses:SARI_01557"/>
<dbReference type="HOGENOM" id="CLU_012893_6_0_6"/>
<dbReference type="Proteomes" id="UP000002084">
    <property type="component" value="Chromosome"/>
</dbReference>
<dbReference type="GO" id="GO:0005886">
    <property type="term" value="C:plasma membrane"/>
    <property type="evidence" value="ECO:0007669"/>
    <property type="project" value="UniProtKB-SubCell"/>
</dbReference>
<dbReference type="GO" id="GO:0015297">
    <property type="term" value="F:antiporter activity"/>
    <property type="evidence" value="ECO:0007669"/>
    <property type="project" value="UniProtKB-UniRule"/>
</dbReference>
<dbReference type="GO" id="GO:0042910">
    <property type="term" value="F:xenobiotic transmembrane transporter activity"/>
    <property type="evidence" value="ECO:0007669"/>
    <property type="project" value="UniProtKB-UniRule"/>
</dbReference>
<dbReference type="GO" id="GO:0006814">
    <property type="term" value="P:sodium ion transport"/>
    <property type="evidence" value="ECO:0007669"/>
    <property type="project" value="UniProtKB-UniRule"/>
</dbReference>
<dbReference type="GO" id="GO:0006855">
    <property type="term" value="P:xenobiotic transmembrane transport"/>
    <property type="evidence" value="ECO:0007669"/>
    <property type="project" value="UniProtKB-UniRule"/>
</dbReference>
<dbReference type="CDD" id="cd13131">
    <property type="entry name" value="MATE_NorM_like"/>
    <property type="match status" value="1"/>
</dbReference>
<dbReference type="HAMAP" id="MF_00400">
    <property type="entry name" value="MdtK"/>
    <property type="match status" value="1"/>
</dbReference>
<dbReference type="InterPro" id="IPR002528">
    <property type="entry name" value="MATE_fam"/>
</dbReference>
<dbReference type="InterPro" id="IPR050222">
    <property type="entry name" value="MATE_MdtK"/>
</dbReference>
<dbReference type="InterPro" id="IPR048279">
    <property type="entry name" value="MdtK-like"/>
</dbReference>
<dbReference type="InterPro" id="IPR022913">
    <property type="entry name" value="Multidrug-R_MdtK"/>
</dbReference>
<dbReference type="NCBIfam" id="TIGR00797">
    <property type="entry name" value="matE"/>
    <property type="match status" value="1"/>
</dbReference>
<dbReference type="PANTHER" id="PTHR43298:SF2">
    <property type="entry name" value="FMN_FAD EXPORTER YEEO-RELATED"/>
    <property type="match status" value="1"/>
</dbReference>
<dbReference type="PANTHER" id="PTHR43298">
    <property type="entry name" value="MULTIDRUG RESISTANCE PROTEIN NORM-RELATED"/>
    <property type="match status" value="1"/>
</dbReference>
<dbReference type="Pfam" id="PF01554">
    <property type="entry name" value="MatE"/>
    <property type="match status" value="2"/>
</dbReference>
<dbReference type="PIRSF" id="PIRSF006603">
    <property type="entry name" value="DinF"/>
    <property type="match status" value="1"/>
</dbReference>
<proteinExistence type="inferred from homology"/>
<sequence length="457" mass="49505">MQKYTSEARQLLALAIPVILAQVAQTAMGFVDTVMAGGYSATDMAAVAIGTSIWLPAILFGHGLLLALTPVIAQLNGSGRRERIAHQVRQGFWLASFVSVLVMIVLWNAGYIIRSMHNIDPALADKAVGYLRALLWGAPGYLFFQVARNQCEGLAKTKPGMVMGFLGLLVNIPVNYIFIYGHFGMPELGGIGCGVATAAVYWVMFIAMLSYIKHARSMRDIRNEKSFGKPDSAVMKRLIQLGLPIALALFFEVTLFAVVALLVSPLGIVNVAGHQIALNFSSLMFVLPMSLAAAVTIRVGYRLGQGSTLDAQTAARTGLSVGVCMAVVTAIFTVTLRKHIALLYNDNPEVVSLAAQLMLLAAVYQISDSIQVIGSGILRGYKDTRSIFFITFTAYWVLGLPSGYILALTDLVVDRMGPAGFWMGFIIGLTSAAVLMMLRMRYLQRQPSSIILQRAAR</sequence>
<organism>
    <name type="scientific">Salmonella arizonae (strain ATCC BAA-731 / CDC346-86 / RSK2980)</name>
    <dbReference type="NCBI Taxonomy" id="41514"/>
    <lineage>
        <taxon>Bacteria</taxon>
        <taxon>Pseudomonadati</taxon>
        <taxon>Pseudomonadota</taxon>
        <taxon>Gammaproteobacteria</taxon>
        <taxon>Enterobacterales</taxon>
        <taxon>Enterobacteriaceae</taxon>
        <taxon>Salmonella</taxon>
    </lineage>
</organism>
<evidence type="ECO:0000255" key="1">
    <source>
        <dbReference type="HAMAP-Rule" id="MF_00400"/>
    </source>
</evidence>
<name>MDTK_SALAR</name>
<feature type="chain" id="PRO_1000080331" description="Multidrug resistance protein MdtK">
    <location>
        <begin position="1"/>
        <end position="457"/>
    </location>
</feature>
<feature type="transmembrane region" description="Helical" evidence="1">
    <location>
        <begin position="11"/>
        <end position="31"/>
    </location>
</feature>
<feature type="transmembrane region" description="Helical" evidence="1">
    <location>
        <begin position="53"/>
        <end position="73"/>
    </location>
</feature>
<feature type="transmembrane region" description="Helical" evidence="1">
    <location>
        <begin position="93"/>
        <end position="113"/>
    </location>
</feature>
<feature type="transmembrane region" description="Helical" evidence="1">
    <location>
        <begin position="127"/>
        <end position="147"/>
    </location>
</feature>
<feature type="transmembrane region" description="Helical" evidence="1">
    <location>
        <begin position="160"/>
        <end position="180"/>
    </location>
</feature>
<feature type="transmembrane region" description="Helical" evidence="1">
    <location>
        <begin position="188"/>
        <end position="208"/>
    </location>
</feature>
<feature type="transmembrane region" description="Helical" evidence="1">
    <location>
        <begin position="243"/>
        <end position="263"/>
    </location>
</feature>
<feature type="transmembrane region" description="Helical" evidence="1">
    <location>
        <begin position="276"/>
        <end position="296"/>
    </location>
</feature>
<feature type="transmembrane region" description="Helical" evidence="1">
    <location>
        <begin position="314"/>
        <end position="334"/>
    </location>
</feature>
<feature type="transmembrane region" description="Helical" evidence="1">
    <location>
        <begin position="357"/>
        <end position="377"/>
    </location>
</feature>
<feature type="transmembrane region" description="Helical" evidence="1">
    <location>
        <begin position="387"/>
        <end position="407"/>
    </location>
</feature>
<feature type="transmembrane region" description="Helical" evidence="1">
    <location>
        <begin position="418"/>
        <end position="438"/>
    </location>
</feature>
<protein>
    <recommendedName>
        <fullName evidence="1">Multidrug resistance protein MdtK</fullName>
    </recommendedName>
    <alternativeName>
        <fullName evidence="1">Multidrug-efflux transporter</fullName>
    </alternativeName>
</protein>
<reference key="1">
    <citation type="submission" date="2007-11" db="EMBL/GenBank/DDBJ databases">
        <authorList>
            <consortium name="The Salmonella enterica serovar Arizonae Genome Sequencing Project"/>
            <person name="McClelland M."/>
            <person name="Sanderson E.K."/>
            <person name="Porwollik S."/>
            <person name="Spieth J."/>
            <person name="Clifton W.S."/>
            <person name="Fulton R."/>
            <person name="Chunyan W."/>
            <person name="Wollam A."/>
            <person name="Shah N."/>
            <person name="Pepin K."/>
            <person name="Bhonagiri V."/>
            <person name="Nash W."/>
            <person name="Johnson M."/>
            <person name="Thiruvilangam P."/>
            <person name="Wilson R."/>
        </authorList>
    </citation>
    <scope>NUCLEOTIDE SEQUENCE [LARGE SCALE GENOMIC DNA]</scope>
    <source>
        <strain>ATCC BAA-731 / CDC346-86 / RSK2980</strain>
    </source>
</reference>